<proteinExistence type="inferred from homology"/>
<reference key="1">
    <citation type="journal article" date="2007" name="ISME J.">
        <title>Population level functional diversity in a microbial community revealed by comparative genomic and metagenomic analyses.</title>
        <authorList>
            <person name="Bhaya D."/>
            <person name="Grossman A.R."/>
            <person name="Steunou A.-S."/>
            <person name="Khuri N."/>
            <person name="Cohan F.M."/>
            <person name="Hamamura N."/>
            <person name="Melendrez M.C."/>
            <person name="Bateson M.M."/>
            <person name="Ward D.M."/>
            <person name="Heidelberg J.F."/>
        </authorList>
    </citation>
    <scope>NUCLEOTIDE SEQUENCE [LARGE SCALE GENOMIC DNA]</scope>
    <source>
        <strain>JA-3-3Ab</strain>
    </source>
</reference>
<evidence type="ECO:0000255" key="1">
    <source>
        <dbReference type="HAMAP-Rule" id="MF_01459"/>
    </source>
</evidence>
<gene>
    <name evidence="1" type="primary">cpcS1</name>
    <name type="ordered locus">CYA_1794</name>
</gene>
<organism>
    <name type="scientific">Synechococcus sp. (strain JA-3-3Ab)</name>
    <name type="common">Cyanobacteria bacterium Yellowstone A-Prime</name>
    <dbReference type="NCBI Taxonomy" id="321327"/>
    <lineage>
        <taxon>Bacteria</taxon>
        <taxon>Bacillati</taxon>
        <taxon>Cyanobacteriota</taxon>
        <taxon>Cyanophyceae</taxon>
        <taxon>Synechococcales</taxon>
        <taxon>Synechococcaceae</taxon>
        <taxon>Synechococcus</taxon>
    </lineage>
</organism>
<protein>
    <recommendedName>
        <fullName evidence="1">Chromophore lyase CpcS/CpeS 1</fullName>
        <ecNumber evidence="1">4.-.-.-</ecNumber>
    </recommendedName>
</protein>
<name>CPXS1_SYNJA</name>
<comment type="function">
    <text evidence="1">Covalently attaches a chromophore to Cys residue(s) of phycobiliproteins.</text>
</comment>
<comment type="similarity">
    <text evidence="1">Belongs to the CpcS/CpeS biliprotein lyase family.</text>
</comment>
<sequence length="184" mass="21309">MNALQKFHHFFNCCIGAWHTERTYHYLDRGEVERSRTDFTIRTLTPELKEKVLADNNYPNHGVDGFLGFHLAFETVSEKGEEAGQELNMLFVPRREGPRGLEGDYLRDRAYEEDRPIVASFRFDPGSLQLVMTTTYTRVVAVDTITLLNPRLRLRQILTYQRPPHGQPLEELLLVGFGVEQKLT</sequence>
<dbReference type="EC" id="4.-.-.-" evidence="1"/>
<dbReference type="EMBL" id="CP000239">
    <property type="protein sequence ID" value="ABC99947.1"/>
    <property type="molecule type" value="Genomic_DNA"/>
</dbReference>
<dbReference type="SMR" id="Q2JTP2"/>
<dbReference type="STRING" id="321327.CYA_1794"/>
<dbReference type="KEGG" id="cya:CYA_1794"/>
<dbReference type="eggNOG" id="ENOG502ZBJJ">
    <property type="taxonomic scope" value="Bacteria"/>
</dbReference>
<dbReference type="HOGENOM" id="CLU_1282167_0_0_3"/>
<dbReference type="OrthoDB" id="529172at2"/>
<dbReference type="Proteomes" id="UP000008818">
    <property type="component" value="Chromosome"/>
</dbReference>
<dbReference type="GO" id="GO:0016829">
    <property type="term" value="F:lyase activity"/>
    <property type="evidence" value="ECO:0007669"/>
    <property type="project" value="UniProtKB-KW"/>
</dbReference>
<dbReference type="CDD" id="cd19433">
    <property type="entry name" value="lipocalin_CpcS-CpeS"/>
    <property type="match status" value="1"/>
</dbReference>
<dbReference type="Gene3D" id="2.40.128.20">
    <property type="match status" value="1"/>
</dbReference>
<dbReference type="HAMAP" id="MF_01459">
    <property type="entry name" value="Chrphore_lyase_CpxS"/>
    <property type="match status" value="1"/>
</dbReference>
<dbReference type="InterPro" id="IPR012674">
    <property type="entry name" value="Calycin"/>
</dbReference>
<dbReference type="InterPro" id="IPR018536">
    <property type="entry name" value="CpcS/CpeS"/>
</dbReference>
<dbReference type="Pfam" id="PF09367">
    <property type="entry name" value="CpeS"/>
    <property type="match status" value="1"/>
</dbReference>
<keyword id="KW-0456">Lyase</keyword>
<feature type="chain" id="PRO_0000403142" description="Chromophore lyase CpcS/CpeS 1">
    <location>
        <begin position="1"/>
        <end position="184"/>
    </location>
</feature>
<accession>Q2JTP2</accession>